<feature type="chain" id="PRO_0000092031" description="Energy-coupling factor transporter ATP-binding protein EcfA2">
    <location>
        <begin position="1"/>
        <end position="288"/>
    </location>
</feature>
<feature type="domain" description="ABC transporter" evidence="1">
    <location>
        <begin position="3"/>
        <end position="246"/>
    </location>
</feature>
<feature type="binding site" evidence="1">
    <location>
        <begin position="40"/>
        <end position="47"/>
    </location>
    <ligand>
        <name>ATP</name>
        <dbReference type="ChEBI" id="CHEBI:30616"/>
    </ligand>
</feature>
<name>ECFA2_LISMO</name>
<keyword id="KW-0067">ATP-binding</keyword>
<keyword id="KW-1003">Cell membrane</keyword>
<keyword id="KW-0472">Membrane</keyword>
<keyword id="KW-0547">Nucleotide-binding</keyword>
<keyword id="KW-1185">Reference proteome</keyword>
<keyword id="KW-1278">Translocase</keyword>
<keyword id="KW-0813">Transport</keyword>
<evidence type="ECO:0000255" key="1">
    <source>
        <dbReference type="HAMAP-Rule" id="MF_01710"/>
    </source>
</evidence>
<reference key="1">
    <citation type="journal article" date="2001" name="Science">
        <title>Comparative genomics of Listeria species.</title>
        <authorList>
            <person name="Glaser P."/>
            <person name="Frangeul L."/>
            <person name="Buchrieser C."/>
            <person name="Rusniok C."/>
            <person name="Amend A."/>
            <person name="Baquero F."/>
            <person name="Berche P."/>
            <person name="Bloecker H."/>
            <person name="Brandt P."/>
            <person name="Chakraborty T."/>
            <person name="Charbit A."/>
            <person name="Chetouani F."/>
            <person name="Couve E."/>
            <person name="de Daruvar A."/>
            <person name="Dehoux P."/>
            <person name="Domann E."/>
            <person name="Dominguez-Bernal G."/>
            <person name="Duchaud E."/>
            <person name="Durant L."/>
            <person name="Dussurget O."/>
            <person name="Entian K.-D."/>
            <person name="Fsihi H."/>
            <person name="Garcia-del Portillo F."/>
            <person name="Garrido P."/>
            <person name="Gautier L."/>
            <person name="Goebel W."/>
            <person name="Gomez-Lopez N."/>
            <person name="Hain T."/>
            <person name="Hauf J."/>
            <person name="Jackson D."/>
            <person name="Jones L.-M."/>
            <person name="Kaerst U."/>
            <person name="Kreft J."/>
            <person name="Kuhn M."/>
            <person name="Kunst F."/>
            <person name="Kurapkat G."/>
            <person name="Madueno E."/>
            <person name="Maitournam A."/>
            <person name="Mata Vicente J."/>
            <person name="Ng E."/>
            <person name="Nedjari H."/>
            <person name="Nordsiek G."/>
            <person name="Novella S."/>
            <person name="de Pablos B."/>
            <person name="Perez-Diaz J.-C."/>
            <person name="Purcell R."/>
            <person name="Remmel B."/>
            <person name="Rose M."/>
            <person name="Schlueter T."/>
            <person name="Simoes N."/>
            <person name="Tierrez A."/>
            <person name="Vazquez-Boland J.-A."/>
            <person name="Voss H."/>
            <person name="Wehland J."/>
            <person name="Cossart P."/>
        </authorList>
    </citation>
    <scope>NUCLEOTIDE SEQUENCE [LARGE SCALE GENOMIC DNA]</scope>
    <source>
        <strain>ATCC BAA-679 / EGD-e</strain>
    </source>
</reference>
<gene>
    <name evidence="1" type="primary">ecfA2</name>
    <name type="synonym">cbiO2</name>
    <name type="ordered locus">lmo2600</name>
</gene>
<comment type="function">
    <text evidence="1">ATP-binding (A) component of a common energy-coupling factor (ECF) ABC-transporter complex. Unlike classic ABC transporters this ECF transporter provides the energy necessary to transport a number of different substrates.</text>
</comment>
<comment type="subunit">
    <text evidence="1">Forms a stable energy-coupling factor (ECF) transporter complex composed of 2 membrane-embedded substrate-binding proteins (S component), 2 ATP-binding proteins (A component) and 2 transmembrane proteins (T component).</text>
</comment>
<comment type="subcellular location">
    <subcellularLocation>
        <location evidence="1">Cell membrane</location>
        <topology evidence="1">Peripheral membrane protein</topology>
    </subcellularLocation>
</comment>
<comment type="similarity">
    <text evidence="1">Belongs to the ABC transporter superfamily. Energy-coupling factor EcfA family.</text>
</comment>
<proteinExistence type="inferred from homology"/>
<sequence length="288" mass="31971">MEIKLEQLGYCYQKNSPFEKRALLDVNVSFDSGSYSAIIGHTGSGKSTLLQHLNALLMPTEGKITVGDREIVAGVKQKKLRDLRKKVGIVFQFPEAQLFEETVEKDICFGPMNFGVSEEDAKLRAKKVIYEVGLTEEILSRSPFELSGGQMRRVAIAGVLAMDPEVLVLDEPTAGLDPHGREEIMEMFYNLHKEKGLTTVLVTHSMEDAARYAEKIVLMKAGTVLQIGTPREIFAKPDELVDLGLSVPDVVRFQGLFERKFDVKLTKTCLTIDELTTEMAPYLAKGGA</sequence>
<protein>
    <recommendedName>
        <fullName evidence="1">Energy-coupling factor transporter ATP-binding protein EcfA2</fullName>
        <shortName evidence="1">ECF transporter A component EcfA2</shortName>
        <ecNumber evidence="1">7.-.-.-</ecNumber>
    </recommendedName>
</protein>
<dbReference type="EC" id="7.-.-.-" evidence="1"/>
<dbReference type="EMBL" id="AL591983">
    <property type="protein sequence ID" value="CAD00678.1"/>
    <property type="molecule type" value="Genomic_DNA"/>
</dbReference>
<dbReference type="PIR" id="AH1399">
    <property type="entry name" value="AH1399"/>
</dbReference>
<dbReference type="RefSeq" id="WP_003728531.1">
    <property type="nucleotide sequence ID" value="NZ_CP149495.1"/>
</dbReference>
<dbReference type="SMR" id="Q8Y455"/>
<dbReference type="STRING" id="169963.gene:17595318"/>
<dbReference type="PaxDb" id="169963-lmo2600"/>
<dbReference type="EnsemblBacteria" id="CAD00678">
    <property type="protein sequence ID" value="CAD00678"/>
    <property type="gene ID" value="CAD00678"/>
</dbReference>
<dbReference type="KEGG" id="lmo:lmo2600"/>
<dbReference type="PATRIC" id="fig|169963.11.peg.2664"/>
<dbReference type="eggNOG" id="COG1122">
    <property type="taxonomic scope" value="Bacteria"/>
</dbReference>
<dbReference type="HOGENOM" id="CLU_000604_1_22_9"/>
<dbReference type="OrthoDB" id="9784332at2"/>
<dbReference type="PhylomeDB" id="Q8Y455"/>
<dbReference type="BioCyc" id="LMON169963:LMO2600-MONOMER"/>
<dbReference type="Proteomes" id="UP000000817">
    <property type="component" value="Chromosome"/>
</dbReference>
<dbReference type="GO" id="GO:0043190">
    <property type="term" value="C:ATP-binding cassette (ABC) transporter complex"/>
    <property type="evidence" value="ECO:0000318"/>
    <property type="project" value="GO_Central"/>
</dbReference>
<dbReference type="GO" id="GO:0005524">
    <property type="term" value="F:ATP binding"/>
    <property type="evidence" value="ECO:0000318"/>
    <property type="project" value="GO_Central"/>
</dbReference>
<dbReference type="GO" id="GO:0016887">
    <property type="term" value="F:ATP hydrolysis activity"/>
    <property type="evidence" value="ECO:0007669"/>
    <property type="project" value="InterPro"/>
</dbReference>
<dbReference type="GO" id="GO:0042626">
    <property type="term" value="F:ATPase-coupled transmembrane transporter activity"/>
    <property type="evidence" value="ECO:0000318"/>
    <property type="project" value="GO_Central"/>
</dbReference>
<dbReference type="CDD" id="cd03225">
    <property type="entry name" value="ABC_cobalt_CbiO_domain1"/>
    <property type="match status" value="1"/>
</dbReference>
<dbReference type="FunFam" id="3.40.50.300:FF:000224">
    <property type="entry name" value="Energy-coupling factor transporter ATP-binding protein EcfA"/>
    <property type="match status" value="1"/>
</dbReference>
<dbReference type="Gene3D" id="3.40.50.300">
    <property type="entry name" value="P-loop containing nucleotide triphosphate hydrolases"/>
    <property type="match status" value="1"/>
</dbReference>
<dbReference type="InterPro" id="IPR003593">
    <property type="entry name" value="AAA+_ATPase"/>
</dbReference>
<dbReference type="InterPro" id="IPR003439">
    <property type="entry name" value="ABC_transporter-like_ATP-bd"/>
</dbReference>
<dbReference type="InterPro" id="IPR017871">
    <property type="entry name" value="ABC_transporter-like_CS"/>
</dbReference>
<dbReference type="InterPro" id="IPR015856">
    <property type="entry name" value="ABC_transpr_CbiO/EcfA_su"/>
</dbReference>
<dbReference type="InterPro" id="IPR050095">
    <property type="entry name" value="ECF_ABC_transporter_ATP-bd"/>
</dbReference>
<dbReference type="InterPro" id="IPR030946">
    <property type="entry name" value="EcfA2"/>
</dbReference>
<dbReference type="InterPro" id="IPR027417">
    <property type="entry name" value="P-loop_NTPase"/>
</dbReference>
<dbReference type="NCBIfam" id="TIGR04521">
    <property type="entry name" value="ECF_ATPase_2"/>
    <property type="match status" value="1"/>
</dbReference>
<dbReference type="NCBIfam" id="NF010155">
    <property type="entry name" value="PRK13634.1"/>
    <property type="match status" value="1"/>
</dbReference>
<dbReference type="PANTHER" id="PTHR43553:SF27">
    <property type="entry name" value="ENERGY-COUPLING FACTOR TRANSPORTER ATP-BINDING PROTEIN ECFA2"/>
    <property type="match status" value="1"/>
</dbReference>
<dbReference type="PANTHER" id="PTHR43553">
    <property type="entry name" value="HEAVY METAL TRANSPORTER"/>
    <property type="match status" value="1"/>
</dbReference>
<dbReference type="Pfam" id="PF00005">
    <property type="entry name" value="ABC_tran"/>
    <property type="match status" value="1"/>
</dbReference>
<dbReference type="SMART" id="SM00382">
    <property type="entry name" value="AAA"/>
    <property type="match status" value="1"/>
</dbReference>
<dbReference type="SUPFAM" id="SSF52540">
    <property type="entry name" value="P-loop containing nucleoside triphosphate hydrolases"/>
    <property type="match status" value="1"/>
</dbReference>
<dbReference type="PROSITE" id="PS00211">
    <property type="entry name" value="ABC_TRANSPORTER_1"/>
    <property type="match status" value="1"/>
</dbReference>
<dbReference type="PROSITE" id="PS50893">
    <property type="entry name" value="ABC_TRANSPORTER_2"/>
    <property type="match status" value="1"/>
</dbReference>
<dbReference type="PROSITE" id="PS51246">
    <property type="entry name" value="CBIO"/>
    <property type="match status" value="1"/>
</dbReference>
<accession>Q8Y455</accession>
<organism>
    <name type="scientific">Listeria monocytogenes serovar 1/2a (strain ATCC BAA-679 / EGD-e)</name>
    <dbReference type="NCBI Taxonomy" id="169963"/>
    <lineage>
        <taxon>Bacteria</taxon>
        <taxon>Bacillati</taxon>
        <taxon>Bacillota</taxon>
        <taxon>Bacilli</taxon>
        <taxon>Bacillales</taxon>
        <taxon>Listeriaceae</taxon>
        <taxon>Listeria</taxon>
    </lineage>
</organism>